<feature type="chain" id="PRO_0000411218" description="Putative dipeptidase NECHADRAFT_87110">
    <location>
        <begin position="1"/>
        <end position="482"/>
    </location>
</feature>
<feature type="transmembrane region" description="Helical" evidence="2">
    <location>
        <begin position="41"/>
        <end position="61"/>
    </location>
</feature>
<feature type="region of interest" description="Disordered" evidence="4">
    <location>
        <begin position="1"/>
        <end position="24"/>
    </location>
</feature>
<feature type="compositionally biased region" description="Polar residues" evidence="4">
    <location>
        <begin position="1"/>
        <end position="21"/>
    </location>
</feature>
<feature type="binding site" evidence="3">
    <location>
        <position position="90"/>
    </location>
    <ligand>
        <name>Zn(2+)</name>
        <dbReference type="ChEBI" id="CHEBI:29105"/>
        <label>1</label>
        <note>catalytic</note>
    </ligand>
</feature>
<feature type="binding site" evidence="3">
    <location>
        <position position="92"/>
    </location>
    <ligand>
        <name>Zn(2+)</name>
        <dbReference type="ChEBI" id="CHEBI:29105"/>
        <label>1</label>
        <note>catalytic</note>
    </ligand>
</feature>
<feature type="binding site" evidence="3">
    <location>
        <position position="201"/>
    </location>
    <ligand>
        <name>Zn(2+)</name>
        <dbReference type="ChEBI" id="CHEBI:29105"/>
        <label>1</label>
        <note>catalytic</note>
    </ligand>
</feature>
<feature type="binding site" evidence="3">
    <location>
        <position position="201"/>
    </location>
    <ligand>
        <name>Zn(2+)</name>
        <dbReference type="ChEBI" id="CHEBI:29105"/>
        <label>2</label>
        <note>catalytic</note>
    </ligand>
</feature>
<feature type="binding site" evidence="3">
    <location>
        <position position="228"/>
    </location>
    <ligand>
        <name>substrate</name>
    </ligand>
</feature>
<feature type="binding site" evidence="3">
    <location>
        <position position="272"/>
    </location>
    <ligand>
        <name>Zn(2+)</name>
        <dbReference type="ChEBI" id="CHEBI:29105"/>
        <label>2</label>
        <note>catalytic</note>
    </ligand>
</feature>
<feature type="binding site" evidence="3">
    <location>
        <position position="293"/>
    </location>
    <ligand>
        <name>Zn(2+)</name>
        <dbReference type="ChEBI" id="CHEBI:29105"/>
        <label>2</label>
        <note>catalytic</note>
    </ligand>
</feature>
<feature type="binding site" evidence="3">
    <location>
        <position position="304"/>
    </location>
    <ligand>
        <name>substrate</name>
    </ligand>
</feature>
<feature type="binding site" evidence="3">
    <location>
        <position position="364"/>
    </location>
    <ligand>
        <name>substrate</name>
    </ligand>
</feature>
<feature type="glycosylation site" description="N-linked (GlcNAc...) asparagine" evidence="2">
    <location>
        <position position="18"/>
    </location>
</feature>
<feature type="disulfide bond" evidence="3">
    <location>
        <begin position="141"/>
        <end position="230"/>
    </location>
</feature>
<dbReference type="EC" id="3.4.13.19" evidence="3"/>
<dbReference type="EMBL" id="GG698930">
    <property type="protein sequence ID" value="EEU36188.1"/>
    <property type="molecule type" value="Genomic_DNA"/>
</dbReference>
<dbReference type="RefSeq" id="XP_003041901.1">
    <property type="nucleotide sequence ID" value="XM_003041855.1"/>
</dbReference>
<dbReference type="SMR" id="C7ZIE1"/>
<dbReference type="EnsemblFungi" id="NechaT87110">
    <property type="protein sequence ID" value="NechaP87110"/>
    <property type="gene ID" value="NechaG87110"/>
</dbReference>
<dbReference type="GeneID" id="9674281"/>
<dbReference type="KEGG" id="nhe:NECHADRAFT_87110"/>
<dbReference type="VEuPathDB" id="FungiDB:NECHADRAFT_87110"/>
<dbReference type="eggNOG" id="KOG4127">
    <property type="taxonomic scope" value="Eukaryota"/>
</dbReference>
<dbReference type="HOGENOM" id="CLU_031404_4_0_1"/>
<dbReference type="InParanoid" id="C7ZIE1"/>
<dbReference type="OMA" id="WSGNVLR"/>
<dbReference type="OrthoDB" id="445695at2759"/>
<dbReference type="Proteomes" id="UP000005206">
    <property type="component" value="Unassembled WGS sequence"/>
</dbReference>
<dbReference type="GO" id="GO:0016020">
    <property type="term" value="C:membrane"/>
    <property type="evidence" value="ECO:0007669"/>
    <property type="project" value="UniProtKB-SubCell"/>
</dbReference>
<dbReference type="GO" id="GO:0046872">
    <property type="term" value="F:metal ion binding"/>
    <property type="evidence" value="ECO:0007669"/>
    <property type="project" value="UniProtKB-KW"/>
</dbReference>
<dbReference type="GO" id="GO:0070573">
    <property type="term" value="F:metallodipeptidase activity"/>
    <property type="evidence" value="ECO:0007669"/>
    <property type="project" value="InterPro"/>
</dbReference>
<dbReference type="GO" id="GO:0006508">
    <property type="term" value="P:proteolysis"/>
    <property type="evidence" value="ECO:0007669"/>
    <property type="project" value="UniProtKB-KW"/>
</dbReference>
<dbReference type="CDD" id="cd01301">
    <property type="entry name" value="rDP_like"/>
    <property type="match status" value="1"/>
</dbReference>
<dbReference type="Gene3D" id="3.20.20.140">
    <property type="entry name" value="Metal-dependent hydrolases"/>
    <property type="match status" value="1"/>
</dbReference>
<dbReference type="InterPro" id="IPR032466">
    <property type="entry name" value="Metal_Hydrolase"/>
</dbReference>
<dbReference type="InterPro" id="IPR008257">
    <property type="entry name" value="Pept_M19"/>
</dbReference>
<dbReference type="PANTHER" id="PTHR10443:SF12">
    <property type="entry name" value="DIPEPTIDASE"/>
    <property type="match status" value="1"/>
</dbReference>
<dbReference type="PANTHER" id="PTHR10443">
    <property type="entry name" value="MICROSOMAL DIPEPTIDASE"/>
    <property type="match status" value="1"/>
</dbReference>
<dbReference type="Pfam" id="PF01244">
    <property type="entry name" value="Peptidase_M19"/>
    <property type="match status" value="1"/>
</dbReference>
<dbReference type="SUPFAM" id="SSF51556">
    <property type="entry name" value="Metallo-dependent hydrolases"/>
    <property type="match status" value="1"/>
</dbReference>
<dbReference type="PROSITE" id="PS51365">
    <property type="entry name" value="RENAL_DIPEPTIDASE_2"/>
    <property type="match status" value="1"/>
</dbReference>
<sequence length="482" mass="54050">MADTQTPNLQNTAEGDANTSAENERSLTVRANHQSQNTRSWLRYPFLVAGIALFLGPFSFFWPREGPIDSKDYVERTKRVLKTTPLIDGHNDLPWQLRIELHNRIYDGRVDLSKKLLGHTDIQRMRQGMVGGQFWSVYVDCDTQQQHFEDPSWVVRDTLEQIDVTRRFVNEHPEHLQYCDTPACAREAFKSGRISSMIGIEGGHQVGGSIGAIRQMFNLGARYITLTHNCDNAFGTSASTVAAGGADQGLFKLGYDAVKEMNRLGMMVDLSHVSHQTMRDVLGVTRAPVIFSHSGAYAVEPHLRHAPDDVLRLVKQNGGIVMAVFVNRFLNMKNPDQATIHDVVDHILHIAEVCGWECVGIGSDFSGTPFVPVGLEDVSKFPDLIQLLMERGATDQQIRLLAGENILRVWGKIEQRAKELQAGGEKPIEAEYEGRNWHKGMKNSPWMLRRSRDEALVNGAADQPFMFNVDSEGKHNPVVKQV</sequence>
<keyword id="KW-0224">Dipeptidase</keyword>
<keyword id="KW-1015">Disulfide bond</keyword>
<keyword id="KW-0325">Glycoprotein</keyword>
<keyword id="KW-0378">Hydrolase</keyword>
<keyword id="KW-0472">Membrane</keyword>
<keyword id="KW-0479">Metal-binding</keyword>
<keyword id="KW-0482">Metalloprotease</keyword>
<keyword id="KW-0645">Protease</keyword>
<keyword id="KW-1185">Reference proteome</keyword>
<keyword id="KW-0812">Transmembrane</keyword>
<keyword id="KW-1133">Transmembrane helix</keyword>
<keyword id="KW-0862">Zinc</keyword>
<proteinExistence type="inferred from homology"/>
<gene>
    <name type="ORF">NECHADRAFT_87110</name>
</gene>
<organism>
    <name type="scientific">Fusarium vanettenii (strain ATCC MYA-4622 / CBS 123669 / FGSC 9596 / NRRL 45880 / 77-13-4)</name>
    <name type="common">Fusarium solani subsp. pisi</name>
    <dbReference type="NCBI Taxonomy" id="660122"/>
    <lineage>
        <taxon>Eukaryota</taxon>
        <taxon>Fungi</taxon>
        <taxon>Dikarya</taxon>
        <taxon>Ascomycota</taxon>
        <taxon>Pezizomycotina</taxon>
        <taxon>Sordariomycetes</taxon>
        <taxon>Hypocreomycetidae</taxon>
        <taxon>Hypocreales</taxon>
        <taxon>Nectriaceae</taxon>
        <taxon>Fusarium</taxon>
        <taxon>Fusarium solani species complex</taxon>
        <taxon>Fusarium vanettenii</taxon>
    </lineage>
</organism>
<protein>
    <recommendedName>
        <fullName>Putative dipeptidase NECHADRAFT_87110</fullName>
        <ecNumber evidence="3">3.4.13.19</ecNumber>
    </recommendedName>
</protein>
<reference key="1">
    <citation type="journal article" date="2009" name="PLoS Genet.">
        <title>The genome of Nectria haematococca: contribution of supernumerary chromosomes to gene expansion.</title>
        <authorList>
            <person name="Coleman J.J."/>
            <person name="Rounsley S.D."/>
            <person name="Rodriguez-Carres M."/>
            <person name="Kuo A."/>
            <person name="Wasmann C.C."/>
            <person name="Grimwood J."/>
            <person name="Schmutz J."/>
            <person name="Taga M."/>
            <person name="White G.J."/>
            <person name="Zhou S."/>
            <person name="Schwartz D.C."/>
            <person name="Freitag M."/>
            <person name="Ma L.-J."/>
            <person name="Danchin E.G.J."/>
            <person name="Henrissat B."/>
            <person name="Coutinho P.M."/>
            <person name="Nelson D.R."/>
            <person name="Straney D."/>
            <person name="Napoli C.A."/>
            <person name="Barker B.M."/>
            <person name="Gribskov M."/>
            <person name="Rep M."/>
            <person name="Kroken S."/>
            <person name="Molnar I."/>
            <person name="Rensing C."/>
            <person name="Kennell J.C."/>
            <person name="Zamora J."/>
            <person name="Farman M.L."/>
            <person name="Selker E.U."/>
            <person name="Salamov A."/>
            <person name="Shapiro H."/>
            <person name="Pangilinan J."/>
            <person name="Lindquist E."/>
            <person name="Lamers C."/>
            <person name="Grigoriev I.V."/>
            <person name="Geiser D.M."/>
            <person name="Covert S.F."/>
            <person name="Temporini E."/>
            <person name="VanEtten H.D."/>
        </authorList>
    </citation>
    <scope>NUCLEOTIDE SEQUENCE [LARGE SCALE GENOMIC DNA]</scope>
    <source>
        <strain>ATCC MYA-4622 / CBS 123669 / FGSC 9596 / NRRL 45880 / 77-13-4</strain>
    </source>
</reference>
<comment type="function">
    <text evidence="1">Hydrolyzes a wide range of dipeptides.</text>
</comment>
<comment type="catalytic activity">
    <reaction evidence="3">
        <text>an L-aminoacyl-L-amino acid + H2O = 2 an L-alpha-amino acid</text>
        <dbReference type="Rhea" id="RHEA:48940"/>
        <dbReference type="ChEBI" id="CHEBI:15377"/>
        <dbReference type="ChEBI" id="CHEBI:59869"/>
        <dbReference type="ChEBI" id="CHEBI:77460"/>
        <dbReference type="EC" id="3.4.13.19"/>
    </reaction>
</comment>
<comment type="cofactor">
    <cofactor evidence="3">
        <name>Zn(2+)</name>
        <dbReference type="ChEBI" id="CHEBI:29105"/>
    </cofactor>
</comment>
<comment type="subcellular location">
    <subcellularLocation>
        <location evidence="5">Membrane</location>
        <topology evidence="5">Single-pass membrane protein</topology>
    </subcellularLocation>
</comment>
<comment type="similarity">
    <text evidence="3">Belongs to the metallo-dependent hydrolases superfamily. Peptidase M19 family.</text>
</comment>
<evidence type="ECO:0000250" key="1"/>
<evidence type="ECO:0000255" key="2"/>
<evidence type="ECO:0000255" key="3">
    <source>
        <dbReference type="PROSITE-ProRule" id="PRU10073"/>
    </source>
</evidence>
<evidence type="ECO:0000256" key="4">
    <source>
        <dbReference type="SAM" id="MobiDB-lite"/>
    </source>
</evidence>
<evidence type="ECO:0000305" key="5"/>
<accession>C7ZIE1</accession>
<name>DPEP2_FUSV7</name>